<keyword id="KW-0007">Acetylation</keyword>
<keyword id="KW-0067">ATP-binding</keyword>
<keyword id="KW-0406">Ion transport</keyword>
<keyword id="KW-1017">Isopeptide bond</keyword>
<keyword id="KW-0445">Lipid transport</keyword>
<keyword id="KW-0446">Lipid-binding</keyword>
<keyword id="KW-0472">Membrane</keyword>
<keyword id="KW-0496">Mitochondrion</keyword>
<keyword id="KW-1000">Mitochondrion outer membrane</keyword>
<keyword id="KW-0520">NAD</keyword>
<keyword id="KW-0547">Nucleotide-binding</keyword>
<keyword id="KW-0597">Phosphoprotein</keyword>
<keyword id="KW-0626">Porin</keyword>
<keyword id="KW-1185">Reference proteome</keyword>
<keyword id="KW-0812">Transmembrane</keyword>
<keyword id="KW-1134">Transmembrane beta strand</keyword>
<keyword id="KW-0813">Transport</keyword>
<keyword id="KW-0832">Ubl conjugation</keyword>
<sequence length="294" mass="31603">MATYGQPCARPMCIPPSYADLGKAARDIFNKGFGFGLVKLDVKTKSCSGVEFSTSGSSNTDTGKVTGTLETKYKWCEYGLTFTEKWNTDNTLGTEIAIEDQICQGLKLTFDTTFSPNTGKKSGKIKSSYKRECINLGCDVDFDFAGPAIHGSAVFGYEGWLAGYQMTFDSAKSKLTRNNFAVGYRTGDFQLHTNVNDGTEFGGSIYQKVCEDLDTSVNLAWTSGTNCTRFGIAAKYQLDPTASISAKVNNSSLIGVGYTQTLRPGVKLTLSALVDGKSINAGGHKLGLALELEA</sequence>
<feature type="initiator methionine" description="Removed" evidence="2">
    <location>
        <position position="1"/>
    </location>
</feature>
<feature type="chain" id="PRO_0000050508" description="Non-selective voltage-gated ion channel VDAC2">
    <location>
        <begin position="2"/>
        <end position="294"/>
    </location>
</feature>
<feature type="transmembrane region" description="Beta stranded" evidence="1">
    <location>
        <begin position="37"/>
        <end position="46"/>
    </location>
</feature>
<feature type="transmembrane region" description="Beta stranded" evidence="1">
    <location>
        <begin position="50"/>
        <end position="58"/>
    </location>
</feature>
<feature type="transmembrane region" description="Beta stranded" evidence="1">
    <location>
        <begin position="65"/>
        <end position="75"/>
    </location>
</feature>
<feature type="transmembrane region" description="Beta stranded" evidence="1">
    <location>
        <begin position="80"/>
        <end position="87"/>
    </location>
</feature>
<feature type="transmembrane region" description="Beta stranded" evidence="1">
    <location>
        <begin position="91"/>
        <end position="100"/>
    </location>
</feature>
<feature type="transmembrane region" description="Beta stranded" evidence="1">
    <location>
        <begin position="106"/>
        <end position="115"/>
    </location>
</feature>
<feature type="transmembrane region" description="Beta stranded" evidence="1">
    <location>
        <begin position="122"/>
        <end position="131"/>
    </location>
</feature>
<feature type="transmembrane region" description="Beta stranded" evidence="1">
    <location>
        <begin position="134"/>
        <end position="141"/>
    </location>
</feature>
<feature type="transmembrane region" description="Beta stranded" evidence="1">
    <location>
        <begin position="148"/>
        <end position="156"/>
    </location>
</feature>
<feature type="transmembrane region" description="Beta stranded" evidence="1">
    <location>
        <begin position="161"/>
        <end position="169"/>
    </location>
</feature>
<feature type="transmembrane region" description="Beta stranded" evidence="1">
    <location>
        <begin position="174"/>
        <end position="186"/>
    </location>
</feature>
<feature type="transmembrane region" description="Beta stranded" evidence="1">
    <location>
        <begin position="189"/>
        <end position="196"/>
    </location>
</feature>
<feature type="transmembrane region" description="Beta stranded" evidence="1">
    <location>
        <begin position="200"/>
        <end position="209"/>
    </location>
</feature>
<feature type="transmembrane region" description="Beta stranded" evidence="1">
    <location>
        <begin position="213"/>
        <end position="222"/>
    </location>
</feature>
<feature type="transmembrane region" description="Beta stranded" evidence="1">
    <location>
        <begin position="229"/>
        <end position="238"/>
    </location>
</feature>
<feature type="transmembrane region" description="Beta stranded" evidence="1">
    <location>
        <begin position="242"/>
        <end position="249"/>
    </location>
</feature>
<feature type="transmembrane region" description="Beta stranded" evidence="1">
    <location>
        <begin position="253"/>
        <end position="262"/>
    </location>
</feature>
<feature type="transmembrane region" description="Beta stranded" evidence="1">
    <location>
        <begin position="265"/>
        <end position="274"/>
    </location>
</feature>
<feature type="transmembrane region" description="Beta stranded" evidence="1">
    <location>
        <begin position="284"/>
        <end position="293"/>
    </location>
</feature>
<feature type="binding site" evidence="4">
    <location>
        <position position="23"/>
    </location>
    <ligand>
        <name>ATP</name>
        <dbReference type="ChEBI" id="CHEBI:30616"/>
    </ligand>
</feature>
<feature type="binding site" evidence="4">
    <location>
        <position position="31"/>
    </location>
    <ligand>
        <name>ATP</name>
        <dbReference type="ChEBI" id="CHEBI:30616"/>
    </ligand>
</feature>
<feature type="binding site" evidence="1">
    <location>
        <begin position="253"/>
        <end position="255"/>
    </location>
    <ligand>
        <name>NAD(+)</name>
        <dbReference type="ChEBI" id="CHEBI:57540"/>
    </ligand>
</feature>
<feature type="binding site" evidence="1">
    <location>
        <begin position="271"/>
        <end position="275"/>
    </location>
    <ligand>
        <name>NAD(+)</name>
        <dbReference type="ChEBI" id="CHEBI:57540"/>
    </ligand>
</feature>
<feature type="site" description="Involved in ceramide and phosphatidylcholine binding" evidence="2">
    <location>
        <position position="85"/>
    </location>
</feature>
<feature type="modified residue" description="N-acetylalanine" evidence="2">
    <location>
        <position position="2"/>
    </location>
</feature>
<feature type="modified residue" description="N6-acetyllysine; alternate" evidence="2">
    <location>
        <position position="31"/>
    </location>
</feature>
<feature type="modified residue" description="N6-succinyllysine; alternate" evidence="3">
    <location>
        <position position="31"/>
    </location>
</feature>
<feature type="modified residue" description="Phosphotyrosine" evidence="4">
    <location>
        <position position="78"/>
    </location>
</feature>
<feature type="modified residue" description="Phosphothreonine" evidence="1">
    <location>
        <position position="118"/>
    </location>
</feature>
<feature type="modified residue" description="N6-acetyllysine; alternate" evidence="3">
    <location>
        <position position="120"/>
    </location>
</feature>
<feature type="modified residue" description="Phosphoserine" evidence="1">
    <location>
        <position position="251"/>
    </location>
</feature>
<feature type="modified residue" description="N6-acetyllysine; alternate" evidence="1">
    <location>
        <position position="277"/>
    </location>
</feature>
<feature type="cross-link" description="Glycyl lysine isopeptide (Lys-Gly) (interchain with G-Cter in ubiquitin); alternate" evidence="2">
    <location>
        <position position="31"/>
    </location>
</feature>
<feature type="cross-link" description="Glycyl lysine isopeptide (Lys-Gly) (interchain with G-Cter in ubiquitin)" evidence="2">
    <location>
        <position position="64"/>
    </location>
</feature>
<feature type="cross-link" description="Glycyl lysine isopeptide (Lys-Gly) (interchain with G-Cter in ubiquitin); alternate" evidence="2">
    <location>
        <position position="120"/>
    </location>
</feature>
<feature type="cross-link" description="Glycyl lysine isopeptide (Lys-Gly) (interchain with G-Cter in ubiquitin)" evidence="2">
    <location>
        <position position="121"/>
    </location>
</feature>
<feature type="cross-link" description="Glycyl lysine isopeptide (Lys-Gly) (interchain with G-Cter in ubiquitin)" evidence="1">
    <location>
        <position position="172"/>
    </location>
</feature>
<feature type="cross-link" description="Glycyl lysine isopeptide (Lys-Gly) (interchain with G-Cter in ubiquitin); alternate" evidence="2">
    <location>
        <position position="277"/>
    </location>
</feature>
<feature type="sequence conflict" description="In Ref. 1; AAF22836." evidence="6" ref="1">
    <original>YGQP</original>
    <variation>HGQT</variation>
    <location>
        <begin position="4"/>
        <end position="7"/>
    </location>
</feature>
<protein>
    <recommendedName>
        <fullName evidence="5">Non-selective voltage-gated ion channel VDAC2</fullName>
        <shortName>VDAC-2</shortName>
    </recommendedName>
    <alternativeName>
        <fullName>Outer mitochondrial membrane protein porin 2</fullName>
    </alternativeName>
</protein>
<organism>
    <name type="scientific">Oryctolagus cuniculus</name>
    <name type="common">Rabbit</name>
    <dbReference type="NCBI Taxonomy" id="9986"/>
    <lineage>
        <taxon>Eukaryota</taxon>
        <taxon>Metazoa</taxon>
        <taxon>Chordata</taxon>
        <taxon>Craniata</taxon>
        <taxon>Vertebrata</taxon>
        <taxon>Euteleostomi</taxon>
        <taxon>Mammalia</taxon>
        <taxon>Eutheria</taxon>
        <taxon>Euarchontoglires</taxon>
        <taxon>Glires</taxon>
        <taxon>Lagomorpha</taxon>
        <taxon>Leporidae</taxon>
        <taxon>Oryctolagus</taxon>
    </lineage>
</organism>
<accession>P68003</accession>
<accession>G1SWI3</accession>
<accession>Q9TT14</accession>
<reference key="1">
    <citation type="submission" date="1999-12" db="EMBL/GenBank/DDBJ databases">
        <authorList>
            <person name="Rae J.L."/>
        </authorList>
    </citation>
    <scope>NUCLEOTIDE SEQUENCE [MRNA]</scope>
    <source>
        <strain>New Zealand white</strain>
        <tissue>Cornea</tissue>
    </source>
</reference>
<reference evidence="7" key="2">
    <citation type="journal article" date="2011" name="Nature">
        <title>A high-resolution map of human evolutionary constraint using 29 mammals.</title>
        <authorList>
            <person name="Lindblad-Toh K."/>
            <person name="Garber M."/>
            <person name="Zuk O."/>
            <person name="Lin M.F."/>
            <person name="Parker B.J."/>
            <person name="Washietl S."/>
            <person name="Kheradpour P."/>
            <person name="Ernst J."/>
            <person name="Jordan G."/>
            <person name="Mauceli E."/>
            <person name="Ward L.D."/>
            <person name="Lowe C.B."/>
            <person name="Holloway A.K."/>
            <person name="Clamp M."/>
            <person name="Gnerre S."/>
            <person name="Alfoldi J."/>
            <person name="Beal K."/>
            <person name="Chang J."/>
            <person name="Clawson H."/>
            <person name="Cuff J."/>
            <person name="Di Palma F."/>
            <person name="Fitzgerald S."/>
            <person name="Flicek P."/>
            <person name="Guttman M."/>
            <person name="Hubisz M.J."/>
            <person name="Jaffe D.B."/>
            <person name="Jungreis I."/>
            <person name="Kent W.J."/>
            <person name="Kostka D."/>
            <person name="Lara M."/>
            <person name="Martins A.L."/>
            <person name="Massingham T."/>
            <person name="Moltke I."/>
            <person name="Raney B.J."/>
            <person name="Rasmussen M.D."/>
            <person name="Robinson J."/>
            <person name="Stark A."/>
            <person name="Vilella A.J."/>
            <person name="Wen J."/>
            <person name="Xie X."/>
            <person name="Zody M.C."/>
            <person name="Baldwin J."/>
            <person name="Bloom T."/>
            <person name="Chin C.W."/>
            <person name="Heiman D."/>
            <person name="Nicol R."/>
            <person name="Nusbaum C."/>
            <person name="Young S."/>
            <person name="Wilkinson J."/>
            <person name="Worley K.C."/>
            <person name="Kovar C.L."/>
            <person name="Muzny D.M."/>
            <person name="Gibbs R.A."/>
            <person name="Cree A."/>
            <person name="Dihn H.H."/>
            <person name="Fowler G."/>
            <person name="Jhangiani S."/>
            <person name="Joshi V."/>
            <person name="Lee S."/>
            <person name="Lewis L.R."/>
            <person name="Nazareth L.V."/>
            <person name="Okwuonu G."/>
            <person name="Santibanez J."/>
            <person name="Warren W.C."/>
            <person name="Mardis E.R."/>
            <person name="Weinstock G.M."/>
            <person name="Wilson R.K."/>
            <person name="Delehaunty K."/>
            <person name="Dooling D."/>
            <person name="Fronik C."/>
            <person name="Fulton L."/>
            <person name="Fulton B."/>
            <person name="Graves T."/>
            <person name="Minx P."/>
            <person name="Sodergren E."/>
            <person name="Birney E."/>
            <person name="Margulies E.H."/>
            <person name="Herrero J."/>
            <person name="Green E.D."/>
            <person name="Haussler D."/>
            <person name="Siepel A."/>
            <person name="Goldman N."/>
            <person name="Pollard K.S."/>
            <person name="Pedersen J.S."/>
            <person name="Lander E.S."/>
            <person name="Kellis M."/>
        </authorList>
    </citation>
    <scope>NUCLEOTIDE SEQUENCE [LARGE SCALE GENOMIC DNA]</scope>
    <source>
        <strain evidence="7">Thorbecke inbred</strain>
    </source>
</reference>
<name>VDAC2_RABIT</name>
<evidence type="ECO:0000250" key="1">
    <source>
        <dbReference type="UniProtKB" id="P21796"/>
    </source>
</evidence>
<evidence type="ECO:0000250" key="2">
    <source>
        <dbReference type="UniProtKB" id="P45880"/>
    </source>
</evidence>
<evidence type="ECO:0000250" key="3">
    <source>
        <dbReference type="UniProtKB" id="Q60930"/>
    </source>
</evidence>
<evidence type="ECO:0000250" key="4">
    <source>
        <dbReference type="UniProtKB" id="Q60932"/>
    </source>
</evidence>
<evidence type="ECO:0000250" key="5">
    <source>
        <dbReference type="UniProtKB" id="Q9Y5I6"/>
    </source>
</evidence>
<evidence type="ECO:0000305" key="6"/>
<evidence type="ECO:0000312" key="7">
    <source>
        <dbReference type="Proteomes" id="UP000001811"/>
    </source>
</evidence>
<gene>
    <name evidence="5" type="primary">VDAC2</name>
</gene>
<proteinExistence type="evidence at transcript level"/>
<dbReference type="EMBL" id="AF209726">
    <property type="protein sequence ID" value="AAF22836.1"/>
    <property type="molecule type" value="mRNA"/>
</dbReference>
<dbReference type="EMBL" id="AAGW02037086">
    <property type="status" value="NOT_ANNOTATED_CDS"/>
    <property type="molecule type" value="Genomic_DNA"/>
</dbReference>
<dbReference type="RefSeq" id="NP_001076187.1">
    <property type="nucleotide sequence ID" value="NM_001082718.1"/>
</dbReference>
<dbReference type="RefSeq" id="XP_008268130.1">
    <property type="nucleotide sequence ID" value="XM_008269908.4"/>
</dbReference>
<dbReference type="RefSeq" id="XP_069913106.1">
    <property type="nucleotide sequence ID" value="XM_070057005.1"/>
</dbReference>
<dbReference type="RefSeq" id="XP_069913107.1">
    <property type="nucleotide sequence ID" value="XM_070057006.1"/>
</dbReference>
<dbReference type="SMR" id="P68003"/>
<dbReference type="FunCoup" id="P68003">
    <property type="interactions" value="1498"/>
</dbReference>
<dbReference type="STRING" id="9986.ENSOCUP00000047135"/>
<dbReference type="PaxDb" id="9986-ENSOCUP00000007848"/>
<dbReference type="Ensembl" id="ENSOCUT00000009085.3">
    <property type="protein sequence ID" value="ENSOCUP00000007848.2"/>
    <property type="gene ID" value="ENSOCUG00000009082.3"/>
</dbReference>
<dbReference type="GeneID" id="100009473"/>
<dbReference type="KEGG" id="ocu:100009473"/>
<dbReference type="CTD" id="7417"/>
<dbReference type="eggNOG" id="KOG3126">
    <property type="taxonomic scope" value="Eukaryota"/>
</dbReference>
<dbReference type="GeneTree" id="ENSGT00950000182869"/>
<dbReference type="HOGENOM" id="CLU_044399_2_0_1"/>
<dbReference type="InParanoid" id="P68003"/>
<dbReference type="OMA" id="FKQPAFH"/>
<dbReference type="OrthoDB" id="7827681at2759"/>
<dbReference type="TreeFam" id="TF315091"/>
<dbReference type="Proteomes" id="UP000001811">
    <property type="component" value="Chromosome 18"/>
</dbReference>
<dbReference type="Bgee" id="ENSOCUG00000009082">
    <property type="expression patterns" value="Expressed in heart and 14 other cell types or tissues"/>
</dbReference>
<dbReference type="GO" id="GO:0016020">
    <property type="term" value="C:membrane"/>
    <property type="evidence" value="ECO:0000250"/>
    <property type="project" value="UniProtKB"/>
</dbReference>
<dbReference type="GO" id="GO:0005741">
    <property type="term" value="C:mitochondrial outer membrane"/>
    <property type="evidence" value="ECO:0000250"/>
    <property type="project" value="UniProtKB"/>
</dbReference>
<dbReference type="GO" id="GO:0005739">
    <property type="term" value="C:mitochondrion"/>
    <property type="evidence" value="ECO:0000250"/>
    <property type="project" value="UniProtKB"/>
</dbReference>
<dbReference type="GO" id="GO:0046930">
    <property type="term" value="C:pore complex"/>
    <property type="evidence" value="ECO:0007669"/>
    <property type="project" value="UniProtKB-KW"/>
</dbReference>
<dbReference type="GO" id="GO:0097225">
    <property type="term" value="C:sperm midpiece"/>
    <property type="evidence" value="ECO:0000250"/>
    <property type="project" value="UniProtKB"/>
</dbReference>
<dbReference type="GO" id="GO:0005524">
    <property type="term" value="F:ATP binding"/>
    <property type="evidence" value="ECO:0007669"/>
    <property type="project" value="UniProtKB-KW"/>
</dbReference>
<dbReference type="GO" id="GO:0097001">
    <property type="term" value="F:ceramide binding"/>
    <property type="evidence" value="ECO:0000250"/>
    <property type="project" value="UniProtKB"/>
</dbReference>
<dbReference type="GO" id="GO:0015485">
    <property type="term" value="F:cholesterol binding"/>
    <property type="evidence" value="ECO:0000250"/>
    <property type="project" value="UniProtKB"/>
</dbReference>
<dbReference type="GO" id="GO:0008142">
    <property type="term" value="F:oxysterol binding"/>
    <property type="evidence" value="ECO:0000250"/>
    <property type="project" value="UniProtKB"/>
</dbReference>
<dbReference type="GO" id="GO:0031210">
    <property type="term" value="F:phosphatidylcholine binding"/>
    <property type="evidence" value="ECO:0000250"/>
    <property type="project" value="UniProtKB"/>
</dbReference>
<dbReference type="GO" id="GO:0015288">
    <property type="term" value="F:porin activity"/>
    <property type="evidence" value="ECO:0007669"/>
    <property type="project" value="UniProtKB-KW"/>
</dbReference>
<dbReference type="GO" id="GO:0008308">
    <property type="term" value="F:voltage-gated monoatomic anion channel activity"/>
    <property type="evidence" value="ECO:0007669"/>
    <property type="project" value="InterPro"/>
</dbReference>
<dbReference type="GO" id="GO:0005244">
    <property type="term" value="F:voltage-gated monoatomic ion channel activity"/>
    <property type="evidence" value="ECO:0000250"/>
    <property type="project" value="UniProtKB"/>
</dbReference>
<dbReference type="GO" id="GO:0006869">
    <property type="term" value="P:lipid transport"/>
    <property type="evidence" value="ECO:0007669"/>
    <property type="project" value="UniProtKB-KW"/>
</dbReference>
<dbReference type="GO" id="GO:0097345">
    <property type="term" value="P:mitochondrial outer membrane permeabilization"/>
    <property type="evidence" value="ECO:0000250"/>
    <property type="project" value="UniProtKB"/>
</dbReference>
<dbReference type="GO" id="GO:0006820">
    <property type="term" value="P:monoatomic anion transport"/>
    <property type="evidence" value="ECO:0000250"/>
    <property type="project" value="UniProtKB"/>
</dbReference>
<dbReference type="CDD" id="cd07306">
    <property type="entry name" value="Porin3_VDAC"/>
    <property type="match status" value="1"/>
</dbReference>
<dbReference type="FunFam" id="2.40.160.10:FF:000001">
    <property type="entry name" value="Voltage-dependent anion-selective channel protein 2"/>
    <property type="match status" value="1"/>
</dbReference>
<dbReference type="Gene3D" id="2.40.160.10">
    <property type="entry name" value="Porin"/>
    <property type="match status" value="1"/>
</dbReference>
<dbReference type="InterPro" id="IPR023614">
    <property type="entry name" value="Porin_dom_sf"/>
</dbReference>
<dbReference type="InterPro" id="IPR001925">
    <property type="entry name" value="Porin_Euk"/>
</dbReference>
<dbReference type="InterPro" id="IPR027246">
    <property type="entry name" value="Porin_Euk/Tom40"/>
</dbReference>
<dbReference type="PANTHER" id="PTHR11743">
    <property type="entry name" value="VOLTAGE-DEPENDENT ANION-SELECTIVE CHANNEL"/>
    <property type="match status" value="1"/>
</dbReference>
<dbReference type="PANTHER" id="PTHR11743:SF12">
    <property type="entry name" value="VOLTAGE-DEPENDENT ANION-SELECTIVE CHANNEL PROTEIN 2"/>
    <property type="match status" value="1"/>
</dbReference>
<dbReference type="Pfam" id="PF01459">
    <property type="entry name" value="Porin_3"/>
    <property type="match status" value="1"/>
</dbReference>
<dbReference type="PRINTS" id="PR00185">
    <property type="entry name" value="EUKARYTPORIN"/>
</dbReference>
<dbReference type="PROSITE" id="PS00558">
    <property type="entry name" value="EUKARYOTIC_PORIN"/>
    <property type="match status" value="1"/>
</dbReference>
<comment type="function">
    <text evidence="2 3">Non-selective voltage-gated ion channel that mediates the transport of anions and cations through the mitochondrion outer membrane and plasma membrane (By similarity). The channel adopts an open conformation at zero mV and a closed conformation at both positive and negative potentials (By similarity). There are two populations of channels; the main that functions in a lower open-state conductance with lower ion selectivity, that switch, in a voltage-dependent manner, from the open to a low-conducting 'closed' state and the other that has a normal ion selectivity in the typical high conductance, 'open' state (By similarity). Binds various lipids, including the sphingolipid ceramide, the phospholipid phosphatidylcholine, and the sterols cholesterol and oxysterol (By similarity). Binding of ceramide promotes the mitochondrial outer membrane permeabilization (MOMP) apoptotic pathway (By similarity).</text>
</comment>
<comment type="function">
    <text evidence="2">Catalyzes the scrambling of phospholipids across the outer mitochondrial membrane; the mechanism is unrelated to channel activity and is capable of translocating both anionic and zwitterionic phospholipids.</text>
</comment>
<comment type="catalytic activity">
    <reaction evidence="3">
        <text>chloride(in) = chloride(out)</text>
        <dbReference type="Rhea" id="RHEA:29823"/>
        <dbReference type="ChEBI" id="CHEBI:17996"/>
    </reaction>
</comment>
<comment type="catalytic activity">
    <reaction evidence="3">
        <text>K(+)(in) = K(+)(out)</text>
        <dbReference type="Rhea" id="RHEA:29463"/>
        <dbReference type="ChEBI" id="CHEBI:29103"/>
    </reaction>
</comment>
<comment type="catalytic activity">
    <reaction evidence="2">
        <text>a 1,2-diacyl-sn-glycero-3-phospho-L-serine(in) = a 1,2-diacyl-sn-glycero-3-phospho-L-serine(out)</text>
        <dbReference type="Rhea" id="RHEA:38663"/>
        <dbReference type="ChEBI" id="CHEBI:57262"/>
    </reaction>
</comment>
<comment type="catalytic activity">
    <reaction evidence="2">
        <text>a 1,2-diacyl-sn-glycero-3-phosphocholine(in) = a 1,2-diacyl-sn-glycero-3-phosphocholine(out)</text>
        <dbReference type="Rhea" id="RHEA:38571"/>
        <dbReference type="ChEBI" id="CHEBI:57643"/>
    </reaction>
</comment>
<comment type="catalytic activity">
    <reaction evidence="2">
        <text>a 1,2-diacyl-sn-glycero-3-phospho-(1D-myo-inositol)(in) = a 1,2-diacyl-sn-glycero-3-phospho-(1D-myo-inositol)(out)</text>
        <dbReference type="Rhea" id="RHEA:38691"/>
        <dbReference type="ChEBI" id="CHEBI:57880"/>
    </reaction>
</comment>
<comment type="subunit">
    <text evidence="2 3">Monomer, homodimer and higher order oligomers; formation of higher order structures is necessary for scramblase activity (By similarity). Interacts with ARMC12 in a TBC1D21-dependent manner (By similarity). Interacts with KLC3 (By similarity). Interacts with SPATA33 (By similarity). Interacts with PPP3CC in a SPATA33-dependent manner (By similarity).</text>
</comment>
<comment type="subcellular location">
    <subcellularLocation>
        <location evidence="2">Mitochondrion outer membrane</location>
    </subcellularLocation>
    <subcellularLocation>
        <location evidence="2">Membrane</location>
    </subcellularLocation>
    <text evidence="2">May localize to non-mitochondrial membranes.</text>
</comment>
<comment type="domain">
    <text evidence="1">Consists mainly of a membrane-spanning beta-barrel formed by 19 beta-strands.</text>
</comment>
<comment type="PTM">
    <text evidence="2">Ubiquitinated by PRKN during mitophagy, leading to its degradation and enhancement of mitophagy. Deubiquitinated by USP30.</text>
</comment>
<comment type="similarity">
    <text evidence="6">Belongs to the eukaryotic mitochondrial porin family.</text>
</comment>